<keyword id="KW-0378">Hydrolase</keyword>
<keyword id="KW-1185">Reference proteome</keyword>
<evidence type="ECO:0000255" key="1">
    <source>
        <dbReference type="PROSITE-ProRule" id="PRU00054"/>
    </source>
</evidence>
<evidence type="ECO:0000305" key="2"/>
<protein>
    <recommendedName>
        <fullName>Hydrolase MT0498</fullName>
        <ecNumber>3.5.-.-</ecNumber>
    </recommendedName>
</protein>
<sequence length="280" mass="28995">MRIALAQIRSGTDPAANLQLVGKYAGEAATAGAQLVVFPEATMCRLGVPLRQVAEPVDGPWANGVRRIATEAGITVIAGMFTPTGDGRVTNTLIAAGPGTPNQPDAHYHKIHLYDAFGFTESRTVAPGREPVVVVVDGVRVGLTVCYDIRFPALYTELARRGAQLIAVCASWGSGPGKLEQWTLLARARALDSMSYVAAAGQADPGDARTGVGASSAAPTGVGGSLVASPLGEVVVSAGTQPQLLVADIDVDNVAAARDRIAVLRNQTDFVQIDKAQSRG</sequence>
<name>Y480_MYCTO</name>
<feature type="chain" id="PRO_0000427916" description="Hydrolase MT0498">
    <location>
        <begin position="1"/>
        <end position="280"/>
    </location>
</feature>
<feature type="domain" description="CN hydrolase" evidence="1">
    <location>
        <begin position="1"/>
        <end position="251"/>
    </location>
</feature>
<feature type="active site" description="Proton acceptor" evidence="1">
    <location>
        <position position="40"/>
    </location>
</feature>
<feature type="active site" description="Proton donor" evidence="1">
    <location>
        <position position="110"/>
    </location>
</feature>
<feature type="active site" description="Nucleophile" evidence="1">
    <location>
        <position position="146"/>
    </location>
</feature>
<accession>P9WJ00</accession>
<accession>L0T5H5</accession>
<accession>Q11146</accession>
<reference key="1">
    <citation type="journal article" date="2002" name="J. Bacteriol.">
        <title>Whole-genome comparison of Mycobacterium tuberculosis clinical and laboratory strains.</title>
        <authorList>
            <person name="Fleischmann R.D."/>
            <person name="Alland D."/>
            <person name="Eisen J.A."/>
            <person name="Carpenter L."/>
            <person name="White O."/>
            <person name="Peterson J.D."/>
            <person name="DeBoy R.T."/>
            <person name="Dodson R.J."/>
            <person name="Gwinn M.L."/>
            <person name="Haft D.H."/>
            <person name="Hickey E.K."/>
            <person name="Kolonay J.F."/>
            <person name="Nelson W.C."/>
            <person name="Umayam L.A."/>
            <person name="Ermolaeva M.D."/>
            <person name="Salzberg S.L."/>
            <person name="Delcher A."/>
            <person name="Utterback T.R."/>
            <person name="Weidman J.F."/>
            <person name="Khouri H.M."/>
            <person name="Gill J."/>
            <person name="Mikula A."/>
            <person name="Bishai W."/>
            <person name="Jacobs W.R. Jr."/>
            <person name="Venter J.C."/>
            <person name="Fraser C.M."/>
        </authorList>
    </citation>
    <scope>NUCLEOTIDE SEQUENCE [LARGE SCALE GENOMIC DNA]</scope>
    <source>
        <strain>CDC 1551 / Oshkosh</strain>
    </source>
</reference>
<dbReference type="EC" id="3.5.-.-"/>
<dbReference type="EMBL" id="AE000516">
    <property type="protein sequence ID" value="AAK44721.1"/>
    <property type="status" value="ALT_INIT"/>
    <property type="molecule type" value="Genomic_DNA"/>
</dbReference>
<dbReference type="PIR" id="C70743">
    <property type="entry name" value="C70743"/>
</dbReference>
<dbReference type="RefSeq" id="WP_003402350.1">
    <property type="nucleotide sequence ID" value="NZ_KK341227.1"/>
</dbReference>
<dbReference type="SMR" id="P9WJ00"/>
<dbReference type="KEGG" id="mtc:MT0498"/>
<dbReference type="PATRIC" id="fig|83331.31.peg.527"/>
<dbReference type="HOGENOM" id="CLU_030130_1_2_11"/>
<dbReference type="Proteomes" id="UP000001020">
    <property type="component" value="Chromosome"/>
</dbReference>
<dbReference type="GO" id="GO:0016787">
    <property type="term" value="F:hydrolase activity"/>
    <property type="evidence" value="ECO:0007669"/>
    <property type="project" value="UniProtKB-KW"/>
</dbReference>
<dbReference type="CDD" id="cd07581">
    <property type="entry name" value="nitrilase_3"/>
    <property type="match status" value="1"/>
</dbReference>
<dbReference type="FunFam" id="3.60.110.10:FF:000030">
    <property type="entry name" value="Carbon-nitrogen hydrolase"/>
    <property type="match status" value="1"/>
</dbReference>
<dbReference type="Gene3D" id="3.60.110.10">
    <property type="entry name" value="Carbon-nitrogen hydrolase"/>
    <property type="match status" value="1"/>
</dbReference>
<dbReference type="InterPro" id="IPR003010">
    <property type="entry name" value="C-N_Hydrolase"/>
</dbReference>
<dbReference type="InterPro" id="IPR036526">
    <property type="entry name" value="C-N_Hydrolase_sf"/>
</dbReference>
<dbReference type="InterPro" id="IPR001110">
    <property type="entry name" value="UPF0012_CS"/>
</dbReference>
<dbReference type="PANTHER" id="PTHR23088:SF27">
    <property type="entry name" value="DEAMINATED GLUTATHIONE AMIDASE"/>
    <property type="match status" value="1"/>
</dbReference>
<dbReference type="PANTHER" id="PTHR23088">
    <property type="entry name" value="NITRILASE-RELATED"/>
    <property type="match status" value="1"/>
</dbReference>
<dbReference type="Pfam" id="PF00795">
    <property type="entry name" value="CN_hydrolase"/>
    <property type="match status" value="1"/>
</dbReference>
<dbReference type="SUPFAM" id="SSF56317">
    <property type="entry name" value="Carbon-nitrogen hydrolase"/>
    <property type="match status" value="1"/>
</dbReference>
<dbReference type="PROSITE" id="PS50263">
    <property type="entry name" value="CN_HYDROLASE"/>
    <property type="match status" value="1"/>
</dbReference>
<dbReference type="PROSITE" id="PS01227">
    <property type="entry name" value="UPF0012"/>
    <property type="match status" value="1"/>
</dbReference>
<proteinExistence type="inferred from homology"/>
<gene>
    <name type="ordered locus">MT0498</name>
</gene>
<comment type="similarity">
    <text evidence="2">Belongs to the carbon-nitrogen hydrolase superfamily. NIT1/NIT2 family.</text>
</comment>
<comment type="sequence caution" evidence="2">
    <conflict type="erroneous initiation">
        <sequence resource="EMBL-CDS" id="AAK44721"/>
    </conflict>
    <text>Extended N-terminus.</text>
</comment>
<organism>
    <name type="scientific">Mycobacterium tuberculosis (strain CDC 1551 / Oshkosh)</name>
    <dbReference type="NCBI Taxonomy" id="83331"/>
    <lineage>
        <taxon>Bacteria</taxon>
        <taxon>Bacillati</taxon>
        <taxon>Actinomycetota</taxon>
        <taxon>Actinomycetes</taxon>
        <taxon>Mycobacteriales</taxon>
        <taxon>Mycobacteriaceae</taxon>
        <taxon>Mycobacterium</taxon>
        <taxon>Mycobacterium tuberculosis complex</taxon>
    </lineage>
</organism>